<accession>B1LAX5</accession>
<proteinExistence type="inferred from homology"/>
<dbReference type="EMBL" id="CP000969">
    <property type="protein sequence ID" value="ACB09473.1"/>
    <property type="molecule type" value="Genomic_DNA"/>
</dbReference>
<dbReference type="RefSeq" id="WP_012310961.1">
    <property type="nucleotide sequence ID" value="NC_010483.1"/>
</dbReference>
<dbReference type="SMR" id="B1LAX5"/>
<dbReference type="KEGG" id="trq:TRQ2_1128"/>
<dbReference type="HOGENOM" id="CLU_101379_2_1_0"/>
<dbReference type="Proteomes" id="UP000001687">
    <property type="component" value="Chromosome"/>
</dbReference>
<dbReference type="GO" id="GO:0003677">
    <property type="term" value="F:DNA binding"/>
    <property type="evidence" value="ECO:0007669"/>
    <property type="project" value="UniProtKB-UniRule"/>
</dbReference>
<dbReference type="GO" id="GO:0070063">
    <property type="term" value="F:RNA polymerase binding"/>
    <property type="evidence" value="ECO:0007669"/>
    <property type="project" value="InterPro"/>
</dbReference>
<dbReference type="GO" id="GO:0006354">
    <property type="term" value="P:DNA-templated transcription elongation"/>
    <property type="evidence" value="ECO:0007669"/>
    <property type="project" value="TreeGrafter"/>
</dbReference>
<dbReference type="GO" id="GO:0032784">
    <property type="term" value="P:regulation of DNA-templated transcription elongation"/>
    <property type="evidence" value="ECO:0007669"/>
    <property type="project" value="UniProtKB-UniRule"/>
</dbReference>
<dbReference type="FunFam" id="1.10.287.180:FF:000001">
    <property type="entry name" value="Transcription elongation factor GreA"/>
    <property type="match status" value="1"/>
</dbReference>
<dbReference type="FunFam" id="3.10.50.30:FF:000001">
    <property type="entry name" value="Transcription elongation factor GreA"/>
    <property type="match status" value="1"/>
</dbReference>
<dbReference type="Gene3D" id="3.10.50.30">
    <property type="entry name" value="Transcription elongation factor, GreA/GreB, C-terminal domain"/>
    <property type="match status" value="1"/>
</dbReference>
<dbReference type="Gene3D" id="1.10.287.180">
    <property type="entry name" value="Transcription elongation factor, GreA/GreB, N-terminal domain"/>
    <property type="match status" value="1"/>
</dbReference>
<dbReference type="HAMAP" id="MF_00105">
    <property type="entry name" value="GreA_GreB"/>
    <property type="match status" value="1"/>
</dbReference>
<dbReference type="InterPro" id="IPR036953">
    <property type="entry name" value="GreA/GreB_C_sf"/>
</dbReference>
<dbReference type="InterPro" id="IPR018151">
    <property type="entry name" value="TF_GreA/GreB_CS"/>
</dbReference>
<dbReference type="InterPro" id="IPR006359">
    <property type="entry name" value="Tscrpt_elong_fac_GreA"/>
</dbReference>
<dbReference type="InterPro" id="IPR028624">
    <property type="entry name" value="Tscrpt_elong_fac_GreA/B"/>
</dbReference>
<dbReference type="InterPro" id="IPR001437">
    <property type="entry name" value="Tscrpt_elong_fac_GreA/B_C"/>
</dbReference>
<dbReference type="InterPro" id="IPR023459">
    <property type="entry name" value="Tscrpt_elong_fac_GreA/B_fam"/>
</dbReference>
<dbReference type="InterPro" id="IPR022691">
    <property type="entry name" value="Tscrpt_elong_fac_GreA/B_N"/>
</dbReference>
<dbReference type="InterPro" id="IPR036805">
    <property type="entry name" value="Tscrpt_elong_fac_GreA/B_N_sf"/>
</dbReference>
<dbReference type="NCBIfam" id="TIGR01462">
    <property type="entry name" value="greA"/>
    <property type="match status" value="1"/>
</dbReference>
<dbReference type="NCBIfam" id="NF001263">
    <property type="entry name" value="PRK00226.1-4"/>
    <property type="match status" value="1"/>
</dbReference>
<dbReference type="PANTHER" id="PTHR30437">
    <property type="entry name" value="TRANSCRIPTION ELONGATION FACTOR GREA"/>
    <property type="match status" value="1"/>
</dbReference>
<dbReference type="PANTHER" id="PTHR30437:SF4">
    <property type="entry name" value="TRANSCRIPTION ELONGATION FACTOR GREA"/>
    <property type="match status" value="1"/>
</dbReference>
<dbReference type="Pfam" id="PF01272">
    <property type="entry name" value="GreA_GreB"/>
    <property type="match status" value="1"/>
</dbReference>
<dbReference type="Pfam" id="PF03449">
    <property type="entry name" value="GreA_GreB_N"/>
    <property type="match status" value="1"/>
</dbReference>
<dbReference type="PIRSF" id="PIRSF006092">
    <property type="entry name" value="GreA_GreB"/>
    <property type="match status" value="1"/>
</dbReference>
<dbReference type="SUPFAM" id="SSF54534">
    <property type="entry name" value="FKBP-like"/>
    <property type="match status" value="1"/>
</dbReference>
<dbReference type="SUPFAM" id="SSF46557">
    <property type="entry name" value="GreA transcript cleavage protein, N-terminal domain"/>
    <property type="match status" value="1"/>
</dbReference>
<dbReference type="PROSITE" id="PS00829">
    <property type="entry name" value="GREAB_1"/>
    <property type="match status" value="1"/>
</dbReference>
<dbReference type="PROSITE" id="PS00830">
    <property type="entry name" value="GREAB_2"/>
    <property type="match status" value="1"/>
</dbReference>
<comment type="function">
    <text evidence="1">Necessary for efficient RNA polymerase transcription elongation past template-encoded arresting sites. The arresting sites in DNA have the property of trapping a certain fraction of elongating RNA polymerases that pass through, resulting in locked ternary complexes. Cleavage of the nascent transcript by cleavage factors such as GreA or GreB allows the resumption of elongation from the new 3'terminus. GreA releases sequences of 2 to 3 nucleotides.</text>
</comment>
<comment type="similarity">
    <text evidence="1">Belongs to the GreA/GreB family.</text>
</comment>
<protein>
    <recommendedName>
        <fullName evidence="1">Transcription elongation factor GreA</fullName>
    </recommendedName>
    <alternativeName>
        <fullName evidence="1">Transcript cleavage factor GreA</fullName>
    </alternativeName>
</protein>
<evidence type="ECO:0000255" key="1">
    <source>
        <dbReference type="HAMAP-Rule" id="MF_00105"/>
    </source>
</evidence>
<keyword id="KW-0175">Coiled coil</keyword>
<keyword id="KW-0238">DNA-binding</keyword>
<keyword id="KW-0804">Transcription</keyword>
<keyword id="KW-0805">Transcription regulation</keyword>
<name>GREA_THESQ</name>
<sequence>MKKVRLTREGYEKLKKELEDLKRKFMYEISERIKEARELGDLSENSEYEAAKNEQGRVGSRIMEIEQILSNAEIIEDSEENDEITLGKWVVIRNLDTGEEHKFRIVTPQEADFFAQKLSSDSPLGKSLLGRKVGDVVKVKAPSGVQRYQVIAVMNK</sequence>
<organism>
    <name type="scientific">Thermotoga sp. (strain RQ2)</name>
    <dbReference type="NCBI Taxonomy" id="126740"/>
    <lineage>
        <taxon>Bacteria</taxon>
        <taxon>Thermotogati</taxon>
        <taxon>Thermotogota</taxon>
        <taxon>Thermotogae</taxon>
        <taxon>Thermotogales</taxon>
        <taxon>Thermotogaceae</taxon>
        <taxon>Thermotoga</taxon>
    </lineage>
</organism>
<reference key="1">
    <citation type="journal article" date="2011" name="J. Bacteriol.">
        <title>Genome sequence of Thermotoga sp. strain RQ2, a hyperthermophilic bacterium isolated from a geothermally heated region of the seafloor near Ribeira Quente, the Azores.</title>
        <authorList>
            <person name="Swithers K.S."/>
            <person name="DiPippo J.L."/>
            <person name="Bruce D.C."/>
            <person name="Detter C."/>
            <person name="Tapia R."/>
            <person name="Han S."/>
            <person name="Saunders E."/>
            <person name="Goodwin L.A."/>
            <person name="Han J."/>
            <person name="Woyke T."/>
            <person name="Pitluck S."/>
            <person name="Pennacchio L."/>
            <person name="Nolan M."/>
            <person name="Mikhailova N."/>
            <person name="Lykidis A."/>
            <person name="Land M.L."/>
            <person name="Brettin T."/>
            <person name="Stetter K.O."/>
            <person name="Nelson K.E."/>
            <person name="Gogarten J.P."/>
            <person name="Noll K.M."/>
        </authorList>
    </citation>
    <scope>NUCLEOTIDE SEQUENCE [LARGE SCALE GENOMIC DNA]</scope>
    <source>
        <strain>RQ2</strain>
    </source>
</reference>
<feature type="chain" id="PRO_1000094204" description="Transcription elongation factor GreA">
    <location>
        <begin position="1"/>
        <end position="156"/>
    </location>
</feature>
<feature type="coiled-coil region" evidence="1">
    <location>
        <begin position="1"/>
        <end position="32"/>
    </location>
</feature>
<gene>
    <name evidence="1" type="primary">greA</name>
    <name type="ordered locus">TRQ2_1128</name>
</gene>